<gene>
    <name evidence="2" type="primary">aes</name>
    <name type="ordered locus">SSPA2075</name>
</gene>
<evidence type="ECO:0000250" key="1">
    <source>
        <dbReference type="UniProtKB" id="Q5NUF3"/>
    </source>
</evidence>
<evidence type="ECO:0000255" key="2">
    <source>
        <dbReference type="HAMAP-Rule" id="MF_01958"/>
    </source>
</evidence>
<keyword id="KW-0963">Cytoplasm</keyword>
<keyword id="KW-0378">Hydrolase</keyword>
<keyword id="KW-0719">Serine esterase</keyword>
<name>AES_SALPK</name>
<proteinExistence type="inferred from homology"/>
<protein>
    <recommendedName>
        <fullName evidence="2">Acetyl esterase</fullName>
        <ecNumber evidence="2">3.1.1.-</ecNumber>
    </recommendedName>
</protein>
<accession>B5BD42</accession>
<feature type="chain" id="PRO_1000188994" description="Acetyl esterase">
    <location>
        <begin position="1"/>
        <end position="323"/>
    </location>
</feature>
<feature type="short sequence motif" description="Involved in the stabilization of the negatively charged intermediate by the formation of the oxyanion hole" evidence="1">
    <location>
        <begin position="91"/>
        <end position="93"/>
    </location>
</feature>
<feature type="active site" evidence="2">
    <location>
        <position position="165"/>
    </location>
</feature>
<feature type="active site" evidence="2">
    <location>
        <position position="262"/>
    </location>
</feature>
<feature type="active site" evidence="2">
    <location>
        <position position="292"/>
    </location>
</feature>
<dbReference type="EC" id="3.1.1.-" evidence="2"/>
<dbReference type="EMBL" id="FM200053">
    <property type="protein sequence ID" value="CAR60285.1"/>
    <property type="molecule type" value="Genomic_DNA"/>
</dbReference>
<dbReference type="RefSeq" id="WP_000801791.1">
    <property type="nucleotide sequence ID" value="NC_011147.1"/>
</dbReference>
<dbReference type="SMR" id="B5BD42"/>
<dbReference type="ESTHER" id="salty-AES">
    <property type="family name" value="Acetyl_esterase"/>
</dbReference>
<dbReference type="KEGG" id="sek:SSPA2075"/>
<dbReference type="HOGENOM" id="CLU_012494_6_4_6"/>
<dbReference type="Proteomes" id="UP000001869">
    <property type="component" value="Chromosome"/>
</dbReference>
<dbReference type="GO" id="GO:0005737">
    <property type="term" value="C:cytoplasm"/>
    <property type="evidence" value="ECO:0007669"/>
    <property type="project" value="UniProtKB-SubCell"/>
</dbReference>
<dbReference type="GO" id="GO:0052689">
    <property type="term" value="F:carboxylic ester hydrolase activity"/>
    <property type="evidence" value="ECO:0007669"/>
    <property type="project" value="UniProtKB-UniRule"/>
</dbReference>
<dbReference type="FunFam" id="3.40.50.1820:FF:000035">
    <property type="entry name" value="Acetyl esterase"/>
    <property type="match status" value="1"/>
</dbReference>
<dbReference type="Gene3D" id="3.40.50.1820">
    <property type="entry name" value="alpha/beta hydrolase"/>
    <property type="match status" value="1"/>
</dbReference>
<dbReference type="HAMAP" id="MF_01958">
    <property type="entry name" value="Acetyl_esterase"/>
    <property type="match status" value="1"/>
</dbReference>
<dbReference type="InterPro" id="IPR013094">
    <property type="entry name" value="AB_hydrolase_3"/>
</dbReference>
<dbReference type="InterPro" id="IPR029058">
    <property type="entry name" value="AB_hydrolase_fold"/>
</dbReference>
<dbReference type="InterPro" id="IPR023508">
    <property type="entry name" value="Acetyl_esterase"/>
</dbReference>
<dbReference type="InterPro" id="IPR050300">
    <property type="entry name" value="GDXG_lipolytic_enzyme"/>
</dbReference>
<dbReference type="InterPro" id="IPR033140">
    <property type="entry name" value="Lipase_GDXG_put_SER_AS"/>
</dbReference>
<dbReference type="NCBIfam" id="NF007547">
    <property type="entry name" value="PRK10162.1"/>
    <property type="match status" value="1"/>
</dbReference>
<dbReference type="PANTHER" id="PTHR48081">
    <property type="entry name" value="AB HYDROLASE SUPERFAMILY PROTEIN C4A8.06C"/>
    <property type="match status" value="1"/>
</dbReference>
<dbReference type="PANTHER" id="PTHR48081:SF8">
    <property type="entry name" value="ALPHA_BETA HYDROLASE FOLD-3 DOMAIN-CONTAINING PROTEIN-RELATED"/>
    <property type="match status" value="1"/>
</dbReference>
<dbReference type="Pfam" id="PF07859">
    <property type="entry name" value="Abhydrolase_3"/>
    <property type="match status" value="1"/>
</dbReference>
<dbReference type="SUPFAM" id="SSF53474">
    <property type="entry name" value="alpha/beta-Hydrolases"/>
    <property type="match status" value="1"/>
</dbReference>
<dbReference type="PROSITE" id="PS01174">
    <property type="entry name" value="LIPASE_GDXG_SER"/>
    <property type="match status" value="1"/>
</dbReference>
<reference key="1">
    <citation type="journal article" date="2009" name="BMC Genomics">
        <title>Pseudogene accumulation in the evolutionary histories of Salmonella enterica serovars Paratyphi A and Typhi.</title>
        <authorList>
            <person name="Holt K.E."/>
            <person name="Thomson N.R."/>
            <person name="Wain J."/>
            <person name="Langridge G.C."/>
            <person name="Hasan R."/>
            <person name="Bhutta Z.A."/>
            <person name="Quail M.A."/>
            <person name="Norbertczak H."/>
            <person name="Walker D."/>
            <person name="Simmonds M."/>
            <person name="White B."/>
            <person name="Bason N."/>
            <person name="Mungall K."/>
            <person name="Dougan G."/>
            <person name="Parkhill J."/>
        </authorList>
    </citation>
    <scope>NUCLEOTIDE SEQUENCE [LARGE SCALE GENOMIC DNA]</scope>
    <source>
        <strain>AKU_12601</strain>
    </source>
</reference>
<organism>
    <name type="scientific">Salmonella paratyphi A (strain AKU_12601)</name>
    <dbReference type="NCBI Taxonomy" id="554290"/>
    <lineage>
        <taxon>Bacteria</taxon>
        <taxon>Pseudomonadati</taxon>
        <taxon>Pseudomonadota</taxon>
        <taxon>Gammaproteobacteria</taxon>
        <taxon>Enterobacterales</taxon>
        <taxon>Enterobacteriaceae</taxon>
        <taxon>Salmonella</taxon>
    </lineage>
</organism>
<sequence length="323" mass="36825">MKPENKIPVLTRLSDKMKAVVNFQQPGLPPWPADGDIETQRQYYLLERRFWNADAPSMTTRTCAVPTPYGDVTTRLYSPQPTSQATLYYLHGGGFILGNLDTHDRIMRLLARYTGCTVIGIDYSLSPQARYPQAIEETVAVCSYFSQHADEYSLNVEKIGFAGDSAGAMLALASALWLRDKHIRCGNVIAILLWYGLYGLQDSVSRRLFGGAWDGLTREDLDMYEKAYLRNDEDRESPWYCLFNNDLTRDVPPCFIASAEFDPLIDDSRLLHQTLQAHQQPCEYKMYPGTLHAFLHYSRMMTIADDALQDGARFFMARMKTPR</sequence>
<comment type="function">
    <text evidence="2">Displays esterase activity towards short chain fatty esters (acyl chain length of up to 8 carbons). Able to hydrolyze triacetylglycerol (triacetin) and tributyrylglycerol (tributyrin), but not trioleylglycerol (triolein) or cholesterol oleate. Negatively regulates MalT activity by antagonizing maltotriose binding. Inhibits MelA galactosidase activity.</text>
</comment>
<comment type="subunit">
    <text evidence="2">Homodimer. Interacts with MalT and MelA.</text>
</comment>
<comment type="subcellular location">
    <subcellularLocation>
        <location evidence="2">Cytoplasm</location>
    </subcellularLocation>
</comment>
<comment type="similarity">
    <text evidence="2">Belongs to the 'GDXG' lipolytic enzyme family.</text>
</comment>